<name>UBI4P_CANAW</name>
<dbReference type="EMBL" id="Y17558">
    <property type="protein sequence ID" value="CAA76783.1"/>
    <property type="molecule type" value="Genomic_DNA"/>
</dbReference>
<dbReference type="EMBL" id="CM000310">
    <property type="protein sequence ID" value="EEQ44747.1"/>
    <property type="molecule type" value="Genomic_DNA"/>
</dbReference>
<dbReference type="SMR" id="C4YP88"/>
<dbReference type="PaxDb" id="5476-C4YP88"/>
<dbReference type="EnsemblFungi" id="C3_07270C_A-T">
    <property type="protein sequence ID" value="C3_07270C_A-T-p1"/>
    <property type="gene ID" value="C3_07270C_A"/>
</dbReference>
<dbReference type="VEuPathDB" id="FungiDB:C3_07270C_A"/>
<dbReference type="VEuPathDB" id="FungiDB:CAWG_03035"/>
<dbReference type="HOGENOM" id="CLU_010412_0_0_1"/>
<dbReference type="OMA" id="MSDEHTL"/>
<dbReference type="OrthoDB" id="2230at766764"/>
<dbReference type="Proteomes" id="UP000001429">
    <property type="component" value="Chromosome 3"/>
</dbReference>
<dbReference type="GO" id="GO:0005737">
    <property type="term" value="C:cytoplasm"/>
    <property type="evidence" value="ECO:0007669"/>
    <property type="project" value="UniProtKB-SubCell"/>
</dbReference>
<dbReference type="GO" id="GO:0005634">
    <property type="term" value="C:nucleus"/>
    <property type="evidence" value="ECO:0007669"/>
    <property type="project" value="UniProtKB-SubCell"/>
</dbReference>
<dbReference type="CDD" id="cd01803">
    <property type="entry name" value="Ubl_ubiquitin"/>
    <property type="match status" value="3"/>
</dbReference>
<dbReference type="FunFam" id="3.10.20.90:FF:000004">
    <property type="entry name" value="Polyubiquitin Ubiquitin"/>
    <property type="match status" value="3"/>
</dbReference>
<dbReference type="Gene3D" id="3.10.20.90">
    <property type="entry name" value="Phosphatidylinositol 3-kinase Catalytic Subunit, Chain A, domain 1"/>
    <property type="match status" value="3"/>
</dbReference>
<dbReference type="InterPro" id="IPR000626">
    <property type="entry name" value="Ubiquitin-like_dom"/>
</dbReference>
<dbReference type="InterPro" id="IPR029071">
    <property type="entry name" value="Ubiquitin-like_domsf"/>
</dbReference>
<dbReference type="InterPro" id="IPR019954">
    <property type="entry name" value="Ubiquitin_CS"/>
</dbReference>
<dbReference type="InterPro" id="IPR019956">
    <property type="entry name" value="Ubiquitin_dom"/>
</dbReference>
<dbReference type="InterPro" id="IPR050158">
    <property type="entry name" value="Ubiquitin_ubiquitin-like"/>
</dbReference>
<dbReference type="PANTHER" id="PTHR10666">
    <property type="entry name" value="UBIQUITIN"/>
    <property type="match status" value="1"/>
</dbReference>
<dbReference type="Pfam" id="PF00240">
    <property type="entry name" value="ubiquitin"/>
    <property type="match status" value="3"/>
</dbReference>
<dbReference type="PRINTS" id="PR00348">
    <property type="entry name" value="UBIQUITIN"/>
</dbReference>
<dbReference type="SMART" id="SM00213">
    <property type="entry name" value="UBQ"/>
    <property type="match status" value="3"/>
</dbReference>
<dbReference type="SUPFAM" id="SSF54236">
    <property type="entry name" value="Ubiquitin-like"/>
    <property type="match status" value="3"/>
</dbReference>
<dbReference type="PROSITE" id="PS00299">
    <property type="entry name" value="UBIQUITIN_1"/>
    <property type="match status" value="3"/>
</dbReference>
<dbReference type="PROSITE" id="PS50053">
    <property type="entry name" value="UBIQUITIN_2"/>
    <property type="match status" value="3"/>
</dbReference>
<keyword id="KW-0963">Cytoplasm</keyword>
<keyword id="KW-1017">Isopeptide bond</keyword>
<keyword id="KW-0539">Nucleus</keyword>
<keyword id="KW-0832">Ubl conjugation</keyword>
<organism>
    <name type="scientific">Candida albicans (strain WO-1)</name>
    <name type="common">Yeast</name>
    <dbReference type="NCBI Taxonomy" id="294748"/>
    <lineage>
        <taxon>Eukaryota</taxon>
        <taxon>Fungi</taxon>
        <taxon>Dikarya</taxon>
        <taxon>Ascomycota</taxon>
        <taxon>Saccharomycotina</taxon>
        <taxon>Pichiomycetes</taxon>
        <taxon>Debaryomycetaceae</taxon>
        <taxon>Candida/Lodderomyces clade</taxon>
        <taxon>Candida</taxon>
    </lineage>
</organism>
<evidence type="ECO:0000250" key="1"/>
<evidence type="ECO:0000250" key="2">
    <source>
        <dbReference type="UniProtKB" id="P0CG47"/>
    </source>
</evidence>
<evidence type="ECO:0000250" key="3">
    <source>
        <dbReference type="UniProtKB" id="P0CG63"/>
    </source>
</evidence>
<evidence type="ECO:0000250" key="4">
    <source>
        <dbReference type="UniProtKB" id="Q5ADS0"/>
    </source>
</evidence>
<evidence type="ECO:0000255" key="5">
    <source>
        <dbReference type="PROSITE-ProRule" id="PRU00214"/>
    </source>
</evidence>
<evidence type="ECO:0000305" key="6"/>
<comment type="function">
    <text evidence="2 4">Ubiquitin exists either covalently attached to another protein, or free (unanchored). When covalently bound, it is conjugated to target proteins via an isopeptide bond either as a monomer (monoubiquitin), a polymer linked via different Lys residues of the ubiquitin (polyubiquitin chains) or a linear polymer linked via the initiator Met of the ubiquitin (linear polyubiquitin chains). Polyubiquitin chains, when attached to a target protein, have different functions depending on the Lys residue of the ubiquitin that is linked: Lys-6-linked may be involved in DNA repair; Lys-11-linked is involved in ERAD (endoplasmic reticulum-associated degradation) and in cell-cycle regulation; Lys-29-linked is involved in lysosomal degradation; Lys-33-linked is involved in kinase modification; Lys-48-linked is involved in protein degradation via the proteasome; Lys-63-linked is involved in endocytosis, and DNA-damage responses. Linear polymer chains formed via attachment by the initiator Met lead to cell signaling. Ubiquitin is usually conjugated to Lys residues of target proteins, however, in rare cases, conjugation to Cys or Ser residues has been observed. When polyubiquitin is free (unanchored-polyubiquitin), it also has distinct roles, such as in activation of protein kinases, and in signaling (By similarity). Involved in the negative control of switching, as well as in maintaining the yeast cell morphology (By similarity).</text>
</comment>
<comment type="subcellular location">
    <subcellularLocation>
        <location evidence="1">Cytoplasm</location>
    </subcellularLocation>
    <subcellularLocation>
        <location evidence="1">Nucleus</location>
    </subcellularLocation>
</comment>
<comment type="miscellaneous">
    <text evidence="6">Ubiquitin is encoded by several different genes. UBI3 is a polyprotein with one copy of ubiquitin fused to ribosomal protein eS31. UBI4 is a polyprotein containing 3 exact head to tail repeats of ubiquitin.</text>
</comment>
<comment type="miscellaneous">
    <text evidence="6">For the sake of clarity sequence features are annotated only for the first chain, and are not repeated for each of the following chains.</text>
</comment>
<comment type="similarity">
    <text evidence="6">Belongs to the ubiquitin family.</text>
</comment>
<proteinExistence type="inferred from homology"/>
<gene>
    <name type="primary">UBI4</name>
    <name type="ORF">CAWG_03035</name>
</gene>
<accession>C4YP88</accession>
<accession>G1UAC5</accession>
<feature type="chain" id="PRO_0000458637" description="Ubiquitin">
    <location>
        <begin position="1"/>
        <end position="76"/>
    </location>
</feature>
<feature type="chain" id="PRO_0000458638" description="Ubiquitin">
    <location>
        <begin position="77"/>
        <end position="152"/>
    </location>
</feature>
<feature type="chain" id="PRO_0000458639" description="Ubiquitin">
    <location>
        <begin position="153"/>
        <end position="228"/>
    </location>
</feature>
<feature type="propeptide" id="PRO_0000458640">
    <location>
        <position position="229"/>
    </location>
</feature>
<feature type="domain" description="Ubiquitin-like 1" evidence="5">
    <location>
        <begin position="1"/>
        <end position="76"/>
    </location>
</feature>
<feature type="domain" description="Ubiquitin-like 2" evidence="5">
    <location>
        <begin position="77"/>
        <end position="152"/>
    </location>
</feature>
<feature type="domain" description="Ubiquitin-like 3" evidence="5">
    <location>
        <begin position="153"/>
        <end position="228"/>
    </location>
</feature>
<feature type="cross-link" description="Glycyl lysine isopeptide (Lys-Gly) (interchain with G-Cter in ubiquitin)" evidence="2">
    <location>
        <position position="6"/>
    </location>
</feature>
<feature type="cross-link" description="Glycyl lysine isopeptide (Lys-Gly) (interchain with G-Cter in ubiquitin)" evidence="2">
    <location>
        <position position="11"/>
    </location>
</feature>
<feature type="cross-link" description="Glycyl lysine isopeptide (Lys-Gly) (interchain with G-Cter in ubiquitin)" evidence="2">
    <location>
        <position position="27"/>
    </location>
</feature>
<feature type="cross-link" description="Glycyl lysine isopeptide (Lys-Gly) (interchain with G-Cter in ubiquitin)" evidence="2">
    <location>
        <position position="29"/>
    </location>
</feature>
<feature type="cross-link" description="Glycyl lysine isopeptide (Lys-Gly) (interchain with G-Cter in ubiquitin)" evidence="2">
    <location>
        <position position="33"/>
    </location>
</feature>
<feature type="cross-link" description="Glycyl lysine isopeptide (Lys-Gly) (interchain with G-Cter in ubiquitin)" evidence="3">
    <location>
        <position position="48"/>
    </location>
</feature>
<feature type="cross-link" description="Glycyl lysine isopeptide (Lys-Gly) (interchain with G-Cter in ubiquitin)" evidence="2">
    <location>
        <position position="63"/>
    </location>
</feature>
<feature type="cross-link" description="Glycyl lysine isopeptide (Gly-Lys) (interchain with K-? in acceptor proteins)" evidence="5">
    <location>
        <position position="76"/>
    </location>
</feature>
<reference key="1">
    <citation type="submission" date="1998-06" db="EMBL/GenBank/DDBJ databases">
        <authorList>
            <person name="Roig P."/>
            <person name="Martinez J.P."/>
            <person name="Gozalbo D."/>
        </authorList>
    </citation>
    <scope>NUCLEOTIDE SEQUENCE [GENOMIC DNA]</scope>
    <source>
        <strain>WO-1</strain>
    </source>
</reference>
<reference key="2">
    <citation type="journal article" date="2009" name="Nature">
        <title>Evolution of pathogenicity and sexual reproduction in eight Candida genomes.</title>
        <authorList>
            <person name="Butler G."/>
            <person name="Rasmussen M.D."/>
            <person name="Lin M.F."/>
            <person name="Santos M.A.S."/>
            <person name="Sakthikumar S."/>
            <person name="Munro C.A."/>
            <person name="Rheinbay E."/>
            <person name="Grabherr M."/>
            <person name="Forche A."/>
            <person name="Reedy J.L."/>
            <person name="Agrafioti I."/>
            <person name="Arnaud M.B."/>
            <person name="Bates S."/>
            <person name="Brown A.J.P."/>
            <person name="Brunke S."/>
            <person name="Costanzo M.C."/>
            <person name="Fitzpatrick D.A."/>
            <person name="de Groot P.W.J."/>
            <person name="Harris D."/>
            <person name="Hoyer L.L."/>
            <person name="Hube B."/>
            <person name="Klis F.M."/>
            <person name="Kodira C."/>
            <person name="Lennard N."/>
            <person name="Logue M.E."/>
            <person name="Martin R."/>
            <person name="Neiman A.M."/>
            <person name="Nikolaou E."/>
            <person name="Quail M.A."/>
            <person name="Quinn J."/>
            <person name="Santos M.C."/>
            <person name="Schmitzberger F.F."/>
            <person name="Sherlock G."/>
            <person name="Shah P."/>
            <person name="Silverstein K.A.T."/>
            <person name="Skrzypek M.S."/>
            <person name="Soll D."/>
            <person name="Staggs R."/>
            <person name="Stansfield I."/>
            <person name="Stumpf M.P.H."/>
            <person name="Sudbery P.E."/>
            <person name="Srikantha T."/>
            <person name="Zeng Q."/>
            <person name="Berman J."/>
            <person name="Berriman M."/>
            <person name="Heitman J."/>
            <person name="Gow N.A.R."/>
            <person name="Lorenz M.C."/>
            <person name="Birren B.W."/>
            <person name="Kellis M."/>
            <person name="Cuomo C.A."/>
        </authorList>
    </citation>
    <scope>NUCLEOTIDE SEQUENCE [LARGE SCALE GENOMIC DNA]</scope>
    <source>
        <strain>WO-1</strain>
    </source>
</reference>
<protein>
    <recommendedName>
        <fullName>Ubiquitin-like domain-containing protein</fullName>
    </recommendedName>
    <component>
        <recommendedName>
            <fullName>Ubiquitin</fullName>
        </recommendedName>
    </component>
</protein>
<sequence>MQIFVKTLTGKTITLEVESSDTIDNVKSKIQDKEGIPPDQQRLIFAGKQLEDGRTLSDYNIQKESTLHLVLRLRGGMQIFVKTLTGKTITLEVESSDTIDNVKSKIQDKEGIPPDQQRLIFAGKQLEDGRTLSDYNIQKESTLHLVLRLRGGMQIFVKTLTGKTITLEVESSDTIDNVKSKIQDKEGIPPDQQRLIFAGKQLEDGRTLSDYNIQKESTLHLVLRLRGGF</sequence>